<organism>
    <name type="scientific">Xanthomonas campestris pv. campestris (strain 8004)</name>
    <dbReference type="NCBI Taxonomy" id="314565"/>
    <lineage>
        <taxon>Bacteria</taxon>
        <taxon>Pseudomonadati</taxon>
        <taxon>Pseudomonadota</taxon>
        <taxon>Gammaproteobacteria</taxon>
        <taxon>Lysobacterales</taxon>
        <taxon>Lysobacteraceae</taxon>
        <taxon>Xanthomonas</taxon>
    </lineage>
</organism>
<feature type="chain" id="PRO_0000264136" description="Peptidyl-tRNA hydrolase">
    <location>
        <begin position="1"/>
        <end position="193"/>
    </location>
</feature>
<feature type="active site" description="Proton acceptor" evidence="1">
    <location>
        <position position="22"/>
    </location>
</feature>
<feature type="binding site" evidence="1">
    <location>
        <position position="17"/>
    </location>
    <ligand>
        <name>tRNA</name>
        <dbReference type="ChEBI" id="CHEBI:17843"/>
    </ligand>
</feature>
<feature type="binding site" evidence="1">
    <location>
        <position position="68"/>
    </location>
    <ligand>
        <name>tRNA</name>
        <dbReference type="ChEBI" id="CHEBI:17843"/>
    </ligand>
</feature>
<feature type="binding site" evidence="1">
    <location>
        <position position="70"/>
    </location>
    <ligand>
        <name>tRNA</name>
        <dbReference type="ChEBI" id="CHEBI:17843"/>
    </ligand>
</feature>
<feature type="binding site" evidence="1">
    <location>
        <position position="116"/>
    </location>
    <ligand>
        <name>tRNA</name>
        <dbReference type="ChEBI" id="CHEBI:17843"/>
    </ligand>
</feature>
<feature type="site" description="Discriminates between blocked and unblocked aminoacyl-tRNA" evidence="1">
    <location>
        <position position="12"/>
    </location>
</feature>
<feature type="site" description="Stabilizes the basic form of H active site to accept a proton" evidence="1">
    <location>
        <position position="95"/>
    </location>
</feature>
<protein>
    <recommendedName>
        <fullName evidence="1">Peptidyl-tRNA hydrolase</fullName>
        <shortName evidence="1">Pth</shortName>
        <ecNumber evidence="1">3.1.1.29</ecNumber>
    </recommendedName>
</protein>
<proteinExistence type="inferred from homology"/>
<evidence type="ECO:0000255" key="1">
    <source>
        <dbReference type="HAMAP-Rule" id="MF_00083"/>
    </source>
</evidence>
<comment type="function">
    <text evidence="1">Hydrolyzes ribosome-free peptidyl-tRNAs (with 1 or more amino acids incorporated), which drop off the ribosome during protein synthesis, or as a result of ribosome stalling.</text>
</comment>
<comment type="function">
    <text evidence="1">Catalyzes the release of premature peptidyl moieties from peptidyl-tRNA molecules trapped in stalled 50S ribosomal subunits, and thus maintains levels of free tRNAs and 50S ribosomes.</text>
</comment>
<comment type="catalytic activity">
    <reaction evidence="1">
        <text>an N-acyl-L-alpha-aminoacyl-tRNA + H2O = an N-acyl-L-amino acid + a tRNA + H(+)</text>
        <dbReference type="Rhea" id="RHEA:54448"/>
        <dbReference type="Rhea" id="RHEA-COMP:10123"/>
        <dbReference type="Rhea" id="RHEA-COMP:13883"/>
        <dbReference type="ChEBI" id="CHEBI:15377"/>
        <dbReference type="ChEBI" id="CHEBI:15378"/>
        <dbReference type="ChEBI" id="CHEBI:59874"/>
        <dbReference type="ChEBI" id="CHEBI:78442"/>
        <dbReference type="ChEBI" id="CHEBI:138191"/>
        <dbReference type="EC" id="3.1.1.29"/>
    </reaction>
</comment>
<comment type="subunit">
    <text evidence="1">Monomer.</text>
</comment>
<comment type="subcellular location">
    <subcellularLocation>
        <location evidence="1">Cytoplasm</location>
    </subcellularLocation>
</comment>
<comment type="similarity">
    <text evidence="1">Belongs to the PTH family.</text>
</comment>
<name>PTH_XANC8</name>
<reference key="1">
    <citation type="journal article" date="2005" name="Genome Res.">
        <title>Comparative and functional genomic analyses of the pathogenicity of phytopathogen Xanthomonas campestris pv. campestris.</title>
        <authorList>
            <person name="Qian W."/>
            <person name="Jia Y."/>
            <person name="Ren S.-X."/>
            <person name="He Y.-Q."/>
            <person name="Feng J.-X."/>
            <person name="Lu L.-F."/>
            <person name="Sun Q."/>
            <person name="Ying G."/>
            <person name="Tang D.-J."/>
            <person name="Tang H."/>
            <person name="Wu W."/>
            <person name="Hao P."/>
            <person name="Wang L."/>
            <person name="Jiang B.-L."/>
            <person name="Zeng S."/>
            <person name="Gu W.-Y."/>
            <person name="Lu G."/>
            <person name="Rong L."/>
            <person name="Tian Y."/>
            <person name="Yao Z."/>
            <person name="Fu G."/>
            <person name="Chen B."/>
            <person name="Fang R."/>
            <person name="Qiang B."/>
            <person name="Chen Z."/>
            <person name="Zhao G.-P."/>
            <person name="Tang J.-L."/>
            <person name="He C."/>
        </authorList>
    </citation>
    <scope>NUCLEOTIDE SEQUENCE [LARGE SCALE GENOMIC DNA]</scope>
    <source>
        <strain>8004</strain>
    </source>
</reference>
<gene>
    <name evidence="1" type="primary">pth</name>
    <name type="ordered locus">XC_3356</name>
</gene>
<accession>Q4URC3</accession>
<sequence length="193" mass="20952">MSALRLIVGLGNPGPEHAQTRHNAGFRFVDALAERTGARWGLDSKLFGETAKADIAGHTVWLLKPATFMNLSGKSITAALRFWKIEPEQLLVAHDELDLAPGTARLKFDGGHGGQNGLRDTIRLLGHGKFHRLRVGIGHPGHKDRVVPWVLGRAGRDDDMAIGEAVDAAIDALPLALDGNFNEAMKRLHTPKK</sequence>
<keyword id="KW-0963">Cytoplasm</keyword>
<keyword id="KW-0378">Hydrolase</keyword>
<keyword id="KW-0694">RNA-binding</keyword>
<keyword id="KW-0820">tRNA-binding</keyword>
<dbReference type="EC" id="3.1.1.29" evidence="1"/>
<dbReference type="EMBL" id="CP000050">
    <property type="protein sequence ID" value="AAY50400.1"/>
    <property type="molecule type" value="Genomic_DNA"/>
</dbReference>
<dbReference type="RefSeq" id="WP_011269976.1">
    <property type="nucleotide sequence ID" value="NC_007086.1"/>
</dbReference>
<dbReference type="SMR" id="Q4URC3"/>
<dbReference type="KEGG" id="xcb:XC_3356"/>
<dbReference type="HOGENOM" id="CLU_062456_3_1_6"/>
<dbReference type="Proteomes" id="UP000000420">
    <property type="component" value="Chromosome"/>
</dbReference>
<dbReference type="GO" id="GO:0005737">
    <property type="term" value="C:cytoplasm"/>
    <property type="evidence" value="ECO:0007669"/>
    <property type="project" value="UniProtKB-SubCell"/>
</dbReference>
<dbReference type="GO" id="GO:0004045">
    <property type="term" value="F:peptidyl-tRNA hydrolase activity"/>
    <property type="evidence" value="ECO:0007669"/>
    <property type="project" value="UniProtKB-UniRule"/>
</dbReference>
<dbReference type="GO" id="GO:0000049">
    <property type="term" value="F:tRNA binding"/>
    <property type="evidence" value="ECO:0007669"/>
    <property type="project" value="UniProtKB-UniRule"/>
</dbReference>
<dbReference type="GO" id="GO:0006515">
    <property type="term" value="P:protein quality control for misfolded or incompletely synthesized proteins"/>
    <property type="evidence" value="ECO:0007669"/>
    <property type="project" value="UniProtKB-UniRule"/>
</dbReference>
<dbReference type="GO" id="GO:0072344">
    <property type="term" value="P:rescue of stalled ribosome"/>
    <property type="evidence" value="ECO:0007669"/>
    <property type="project" value="UniProtKB-UniRule"/>
</dbReference>
<dbReference type="CDD" id="cd00462">
    <property type="entry name" value="PTH"/>
    <property type="match status" value="1"/>
</dbReference>
<dbReference type="FunFam" id="3.40.50.1470:FF:000001">
    <property type="entry name" value="Peptidyl-tRNA hydrolase"/>
    <property type="match status" value="1"/>
</dbReference>
<dbReference type="Gene3D" id="3.40.50.1470">
    <property type="entry name" value="Peptidyl-tRNA hydrolase"/>
    <property type="match status" value="1"/>
</dbReference>
<dbReference type="HAMAP" id="MF_00083">
    <property type="entry name" value="Pept_tRNA_hydro_bact"/>
    <property type="match status" value="1"/>
</dbReference>
<dbReference type="InterPro" id="IPR001328">
    <property type="entry name" value="Pept_tRNA_hydro"/>
</dbReference>
<dbReference type="InterPro" id="IPR018171">
    <property type="entry name" value="Pept_tRNA_hydro_CS"/>
</dbReference>
<dbReference type="InterPro" id="IPR036416">
    <property type="entry name" value="Pept_tRNA_hydro_sf"/>
</dbReference>
<dbReference type="NCBIfam" id="TIGR00447">
    <property type="entry name" value="pth"/>
    <property type="match status" value="1"/>
</dbReference>
<dbReference type="PANTHER" id="PTHR17224">
    <property type="entry name" value="PEPTIDYL-TRNA HYDROLASE"/>
    <property type="match status" value="1"/>
</dbReference>
<dbReference type="PANTHER" id="PTHR17224:SF1">
    <property type="entry name" value="PEPTIDYL-TRNA HYDROLASE"/>
    <property type="match status" value="1"/>
</dbReference>
<dbReference type="Pfam" id="PF01195">
    <property type="entry name" value="Pept_tRNA_hydro"/>
    <property type="match status" value="1"/>
</dbReference>
<dbReference type="SUPFAM" id="SSF53178">
    <property type="entry name" value="Peptidyl-tRNA hydrolase-like"/>
    <property type="match status" value="1"/>
</dbReference>
<dbReference type="PROSITE" id="PS01195">
    <property type="entry name" value="PEPT_TRNA_HYDROL_1"/>
    <property type="match status" value="1"/>
</dbReference>